<dbReference type="EMBL" id="CP000946">
    <property type="protein sequence ID" value="ACA77054.1"/>
    <property type="molecule type" value="Genomic_DNA"/>
</dbReference>
<dbReference type="RefSeq" id="WP_000523004.1">
    <property type="nucleotide sequence ID" value="NZ_MTFT01000028.1"/>
</dbReference>
<dbReference type="KEGG" id="ecl:EcolC_1390"/>
<dbReference type="HOGENOM" id="CLU_131462_1_0_6"/>
<dbReference type="UniPathway" id="UPA00030"/>
<dbReference type="GO" id="GO:0005886">
    <property type="term" value="C:plasma membrane"/>
    <property type="evidence" value="ECO:0007669"/>
    <property type="project" value="UniProtKB-SubCell"/>
</dbReference>
<dbReference type="GO" id="GO:1901505">
    <property type="term" value="F:carbohydrate derivative transmembrane transporter activity"/>
    <property type="evidence" value="ECO:0007669"/>
    <property type="project" value="InterPro"/>
</dbReference>
<dbReference type="GO" id="GO:0009245">
    <property type="term" value="P:lipid A biosynthetic process"/>
    <property type="evidence" value="ECO:0007669"/>
    <property type="project" value="UniProtKB-UniRule"/>
</dbReference>
<dbReference type="GO" id="GO:0009103">
    <property type="term" value="P:lipopolysaccharide biosynthetic process"/>
    <property type="evidence" value="ECO:0007669"/>
    <property type="project" value="UniProtKB-UniRule"/>
</dbReference>
<dbReference type="FunFam" id="1.10.3730.20:FF:000003">
    <property type="entry name" value="Probable 4-amino-4-deoxy-L-arabinose-phosphoundecaprenol flippase subunit ArnF"/>
    <property type="match status" value="1"/>
</dbReference>
<dbReference type="Gene3D" id="1.10.3730.20">
    <property type="match status" value="1"/>
</dbReference>
<dbReference type="HAMAP" id="MF_00538">
    <property type="entry name" value="Flippase_ArnF"/>
    <property type="match status" value="1"/>
</dbReference>
<dbReference type="InterPro" id="IPR022832">
    <property type="entry name" value="Flippase_ArnF"/>
</dbReference>
<dbReference type="InterPro" id="IPR000390">
    <property type="entry name" value="Small_drug/metabolite_transptr"/>
</dbReference>
<dbReference type="NCBIfam" id="NF002816">
    <property type="entry name" value="PRK02971.1-2"/>
    <property type="match status" value="1"/>
</dbReference>
<dbReference type="PANTHER" id="PTHR30561:SF9">
    <property type="entry name" value="4-AMINO-4-DEOXY-L-ARABINOSE-PHOSPHOUNDECAPRENOL FLIPPASE SUBUNIT ARNF-RELATED"/>
    <property type="match status" value="1"/>
</dbReference>
<dbReference type="PANTHER" id="PTHR30561">
    <property type="entry name" value="SMR FAMILY PROTON-DEPENDENT DRUG EFFLUX TRANSPORTER SUGE"/>
    <property type="match status" value="1"/>
</dbReference>
<dbReference type="SUPFAM" id="SSF103481">
    <property type="entry name" value="Multidrug resistance efflux transporter EmrE"/>
    <property type="match status" value="1"/>
</dbReference>
<proteinExistence type="inferred from homology"/>
<gene>
    <name evidence="1" type="primary">arnF</name>
    <name type="ordered locus">EcolC_1390</name>
</gene>
<keyword id="KW-0997">Cell inner membrane</keyword>
<keyword id="KW-1003">Cell membrane</keyword>
<keyword id="KW-0441">Lipid A biosynthesis</keyword>
<keyword id="KW-0444">Lipid biosynthesis</keyword>
<keyword id="KW-0443">Lipid metabolism</keyword>
<keyword id="KW-0448">Lipopolysaccharide biosynthesis</keyword>
<keyword id="KW-0472">Membrane</keyword>
<keyword id="KW-0812">Transmembrane</keyword>
<keyword id="KW-1133">Transmembrane helix</keyword>
<keyword id="KW-0813">Transport</keyword>
<comment type="function">
    <text evidence="1">Translocates 4-amino-4-deoxy-L-arabinose-phosphoundecaprenol (alpha-L-Ara4N-phosphoundecaprenol) from the cytoplasmic to the periplasmic side of the inner membrane.</text>
</comment>
<comment type="pathway">
    <text evidence="1">Bacterial outer membrane biogenesis; lipopolysaccharide biosynthesis.</text>
</comment>
<comment type="subunit">
    <text evidence="1">Heterodimer of ArnE and ArnF.</text>
</comment>
<comment type="subcellular location">
    <subcellularLocation>
        <location evidence="1">Cell inner membrane</location>
        <topology evidence="1">Multi-pass membrane protein</topology>
    </subcellularLocation>
</comment>
<comment type="similarity">
    <text evidence="1">Belongs to the ArnF family.</text>
</comment>
<organism>
    <name type="scientific">Escherichia coli (strain ATCC 8739 / DSM 1576 / NBRC 3972 / NCIMB 8545 / WDCM 00012 / Crooks)</name>
    <dbReference type="NCBI Taxonomy" id="481805"/>
    <lineage>
        <taxon>Bacteria</taxon>
        <taxon>Pseudomonadati</taxon>
        <taxon>Pseudomonadota</taxon>
        <taxon>Gammaproteobacteria</taxon>
        <taxon>Enterobacterales</taxon>
        <taxon>Enterobacteriaceae</taxon>
        <taxon>Escherichia</taxon>
    </lineage>
</organism>
<sequence length="128" mass="14097">MGLIWGLFSVIIASVAQLSLGFAASHLPPMTHLWDFIAALLAFGLDARILLLGLLGYLLSVFCWYKTLHKLALSKAYALLSMSYVLVWIASMVLPGWEGTFSLKALLGVACIMSGLMLIFLPMTKQRY</sequence>
<name>ARNF_ECOLC</name>
<protein>
    <recommendedName>
        <fullName evidence="1">Probable 4-amino-4-deoxy-L-arabinose-phosphoundecaprenol flippase subunit ArnF</fullName>
        <shortName evidence="1">L-Ara4N-phosphoundecaprenol flippase subunit ArnF</shortName>
    </recommendedName>
    <alternativeName>
        <fullName evidence="1">Undecaprenyl phosphate-aminoarabinose flippase subunit ArnF</fullName>
    </alternativeName>
</protein>
<feature type="chain" id="PRO_1000081871" description="Probable 4-amino-4-deoxy-L-arabinose-phosphoundecaprenol flippase subunit ArnF">
    <location>
        <begin position="1"/>
        <end position="128"/>
    </location>
</feature>
<feature type="topological domain" description="Cytoplasmic" evidence="1">
    <location>
        <begin position="1"/>
        <end position="2"/>
    </location>
</feature>
<feature type="transmembrane region" description="Helical" evidence="1">
    <location>
        <begin position="3"/>
        <end position="23"/>
    </location>
</feature>
<feature type="topological domain" description="Periplasmic" evidence="1">
    <location>
        <begin position="24"/>
        <end position="35"/>
    </location>
</feature>
<feature type="transmembrane region" description="Helical" evidence="1">
    <location>
        <begin position="36"/>
        <end position="56"/>
    </location>
</feature>
<feature type="topological domain" description="Cytoplasmic" evidence="1">
    <location>
        <begin position="57"/>
        <end position="76"/>
    </location>
</feature>
<feature type="transmembrane region" description="Helical" evidence="1">
    <location>
        <begin position="77"/>
        <end position="97"/>
    </location>
</feature>
<feature type="topological domain" description="Periplasmic" evidence="1">
    <location>
        <begin position="98"/>
        <end position="100"/>
    </location>
</feature>
<feature type="transmembrane region" description="Helical" evidence="1">
    <location>
        <begin position="101"/>
        <end position="121"/>
    </location>
</feature>
<feature type="topological domain" description="Cytoplasmic" evidence="1">
    <location>
        <begin position="122"/>
        <end position="128"/>
    </location>
</feature>
<accession>B1IXS8</accession>
<reference key="1">
    <citation type="submission" date="2008-02" db="EMBL/GenBank/DDBJ databases">
        <title>Complete sequence of Escherichia coli C str. ATCC 8739.</title>
        <authorList>
            <person name="Copeland A."/>
            <person name="Lucas S."/>
            <person name="Lapidus A."/>
            <person name="Glavina del Rio T."/>
            <person name="Dalin E."/>
            <person name="Tice H."/>
            <person name="Bruce D."/>
            <person name="Goodwin L."/>
            <person name="Pitluck S."/>
            <person name="Kiss H."/>
            <person name="Brettin T."/>
            <person name="Detter J.C."/>
            <person name="Han C."/>
            <person name="Kuske C.R."/>
            <person name="Schmutz J."/>
            <person name="Larimer F."/>
            <person name="Land M."/>
            <person name="Hauser L."/>
            <person name="Kyrpides N."/>
            <person name="Mikhailova N."/>
            <person name="Ingram L."/>
            <person name="Richardson P."/>
        </authorList>
    </citation>
    <scope>NUCLEOTIDE SEQUENCE [LARGE SCALE GENOMIC DNA]</scope>
    <source>
        <strain>ATCC 8739 / DSM 1576 / NBRC 3972 / NCIMB 8545 / WDCM 00012 / Crooks</strain>
    </source>
</reference>
<evidence type="ECO:0000255" key="1">
    <source>
        <dbReference type="HAMAP-Rule" id="MF_00538"/>
    </source>
</evidence>